<dbReference type="EC" id="6.3.2.6" evidence="1"/>
<dbReference type="EMBL" id="AM406670">
    <property type="protein sequence ID" value="CAL95489.1"/>
    <property type="molecule type" value="Genomic_DNA"/>
</dbReference>
<dbReference type="RefSeq" id="WP_011766599.1">
    <property type="nucleotide sequence ID" value="NC_008702.1"/>
</dbReference>
<dbReference type="SMR" id="A1K9I4"/>
<dbReference type="STRING" id="62928.azo2873"/>
<dbReference type="KEGG" id="azo:azo2873"/>
<dbReference type="eggNOG" id="COG0152">
    <property type="taxonomic scope" value="Bacteria"/>
</dbReference>
<dbReference type="HOGENOM" id="CLU_045637_0_0_4"/>
<dbReference type="UniPathway" id="UPA00074">
    <property type="reaction ID" value="UER00131"/>
</dbReference>
<dbReference type="Proteomes" id="UP000002588">
    <property type="component" value="Chromosome"/>
</dbReference>
<dbReference type="GO" id="GO:0005737">
    <property type="term" value="C:cytoplasm"/>
    <property type="evidence" value="ECO:0007669"/>
    <property type="project" value="TreeGrafter"/>
</dbReference>
<dbReference type="GO" id="GO:0005524">
    <property type="term" value="F:ATP binding"/>
    <property type="evidence" value="ECO:0007669"/>
    <property type="project" value="UniProtKB-KW"/>
</dbReference>
<dbReference type="GO" id="GO:0004639">
    <property type="term" value="F:phosphoribosylaminoimidazolesuccinocarboxamide synthase activity"/>
    <property type="evidence" value="ECO:0007669"/>
    <property type="project" value="UniProtKB-UniRule"/>
</dbReference>
<dbReference type="GO" id="GO:0006189">
    <property type="term" value="P:'de novo' IMP biosynthetic process"/>
    <property type="evidence" value="ECO:0007669"/>
    <property type="project" value="UniProtKB-UniRule"/>
</dbReference>
<dbReference type="CDD" id="cd01414">
    <property type="entry name" value="SAICAR_synt_Sc"/>
    <property type="match status" value="1"/>
</dbReference>
<dbReference type="FunFam" id="3.30.470.20:FF:000015">
    <property type="entry name" value="Phosphoribosylaminoimidazole-succinocarboxamide synthase"/>
    <property type="match status" value="1"/>
</dbReference>
<dbReference type="Gene3D" id="3.30.470.20">
    <property type="entry name" value="ATP-grasp fold, B domain"/>
    <property type="match status" value="1"/>
</dbReference>
<dbReference type="Gene3D" id="3.30.200.20">
    <property type="entry name" value="Phosphorylase Kinase, domain 1"/>
    <property type="match status" value="1"/>
</dbReference>
<dbReference type="HAMAP" id="MF_00137">
    <property type="entry name" value="SAICAR_synth"/>
    <property type="match status" value="1"/>
</dbReference>
<dbReference type="InterPro" id="IPR028923">
    <property type="entry name" value="SAICAR_synt/ADE2_N"/>
</dbReference>
<dbReference type="InterPro" id="IPR001636">
    <property type="entry name" value="SAICAR_synth"/>
</dbReference>
<dbReference type="InterPro" id="IPR018236">
    <property type="entry name" value="SAICAR_synthetase_CS"/>
</dbReference>
<dbReference type="NCBIfam" id="NF010568">
    <property type="entry name" value="PRK13961.1"/>
    <property type="match status" value="1"/>
</dbReference>
<dbReference type="NCBIfam" id="TIGR00081">
    <property type="entry name" value="purC"/>
    <property type="match status" value="1"/>
</dbReference>
<dbReference type="PANTHER" id="PTHR43700">
    <property type="entry name" value="PHOSPHORIBOSYLAMINOIMIDAZOLE-SUCCINOCARBOXAMIDE SYNTHASE"/>
    <property type="match status" value="1"/>
</dbReference>
<dbReference type="PANTHER" id="PTHR43700:SF1">
    <property type="entry name" value="PHOSPHORIBOSYLAMINOIMIDAZOLE-SUCCINOCARBOXAMIDE SYNTHASE"/>
    <property type="match status" value="1"/>
</dbReference>
<dbReference type="Pfam" id="PF01259">
    <property type="entry name" value="SAICAR_synt"/>
    <property type="match status" value="1"/>
</dbReference>
<dbReference type="SUPFAM" id="SSF56104">
    <property type="entry name" value="SAICAR synthase-like"/>
    <property type="match status" value="1"/>
</dbReference>
<dbReference type="PROSITE" id="PS01057">
    <property type="entry name" value="SAICAR_SYNTHETASE_1"/>
    <property type="match status" value="1"/>
</dbReference>
<dbReference type="PROSITE" id="PS01058">
    <property type="entry name" value="SAICAR_SYNTHETASE_2"/>
    <property type="match status" value="1"/>
</dbReference>
<protein>
    <recommendedName>
        <fullName evidence="1">Phosphoribosylaminoimidazole-succinocarboxamide synthase</fullName>
        <ecNumber evidence="1">6.3.2.6</ecNumber>
    </recommendedName>
    <alternativeName>
        <fullName evidence="1">SAICAR synthetase</fullName>
    </alternativeName>
</protein>
<keyword id="KW-0067">ATP-binding</keyword>
<keyword id="KW-0436">Ligase</keyword>
<keyword id="KW-0547">Nucleotide-binding</keyword>
<keyword id="KW-0658">Purine biosynthesis</keyword>
<keyword id="KW-1185">Reference proteome</keyword>
<sequence length="311" mass="33366">MATPLFESTIKSLPLLGRGKVRDIYAVDADKLLIVTSDRLSAFDVILPNPIPDKGRVLTAMANFWFAKLGHIVPNQLTGIDPESVVAADEREQVKGRALVVKRLKPLPIEAVVRGYVIGSGWKDYQDTGAICGIALPAGLKQAAKLPAPIFTPASKAEVGDHDENISFAQAQANCDAVLAEALAGTGKTGAGLAEEARQAAIALYSQAADYAAGRGIIIADTKFEFGIDAAGTLHLIDEALTPDSSRFWPADSYREGISPPSYDKQYVRDYLETLDWNKKAPGPDLPADVVERTAAKYREAYEKLTGLTLA</sequence>
<comment type="catalytic activity">
    <reaction evidence="1">
        <text>5-amino-1-(5-phospho-D-ribosyl)imidazole-4-carboxylate + L-aspartate + ATP = (2S)-2-[5-amino-1-(5-phospho-beta-D-ribosyl)imidazole-4-carboxamido]succinate + ADP + phosphate + 2 H(+)</text>
        <dbReference type="Rhea" id="RHEA:22628"/>
        <dbReference type="ChEBI" id="CHEBI:15378"/>
        <dbReference type="ChEBI" id="CHEBI:29991"/>
        <dbReference type="ChEBI" id="CHEBI:30616"/>
        <dbReference type="ChEBI" id="CHEBI:43474"/>
        <dbReference type="ChEBI" id="CHEBI:58443"/>
        <dbReference type="ChEBI" id="CHEBI:77657"/>
        <dbReference type="ChEBI" id="CHEBI:456216"/>
        <dbReference type="EC" id="6.3.2.6"/>
    </reaction>
</comment>
<comment type="pathway">
    <text evidence="1">Purine metabolism; IMP biosynthesis via de novo pathway; 5-amino-1-(5-phospho-D-ribosyl)imidazole-4-carboxamide from 5-amino-1-(5-phospho-D-ribosyl)imidazole-4-carboxylate: step 1/2.</text>
</comment>
<comment type="similarity">
    <text evidence="1">Belongs to the SAICAR synthetase family.</text>
</comment>
<reference key="1">
    <citation type="journal article" date="2006" name="Nat. Biotechnol.">
        <title>Complete genome of the mutualistic, N2-fixing grass endophyte Azoarcus sp. strain BH72.</title>
        <authorList>
            <person name="Krause A."/>
            <person name="Ramakumar A."/>
            <person name="Bartels D."/>
            <person name="Battistoni F."/>
            <person name="Bekel T."/>
            <person name="Boch J."/>
            <person name="Boehm M."/>
            <person name="Friedrich F."/>
            <person name="Hurek T."/>
            <person name="Krause L."/>
            <person name="Linke B."/>
            <person name="McHardy A.C."/>
            <person name="Sarkar A."/>
            <person name="Schneiker S."/>
            <person name="Syed A.A."/>
            <person name="Thauer R."/>
            <person name="Vorhoelter F.-J."/>
            <person name="Weidner S."/>
            <person name="Puehler A."/>
            <person name="Reinhold-Hurek B."/>
            <person name="Kaiser O."/>
            <person name="Goesmann A."/>
        </authorList>
    </citation>
    <scope>NUCLEOTIDE SEQUENCE [LARGE SCALE GENOMIC DNA]</scope>
    <source>
        <strain>BH72</strain>
    </source>
</reference>
<name>PUR7_AZOSB</name>
<organism>
    <name type="scientific">Azoarcus sp. (strain BH72)</name>
    <dbReference type="NCBI Taxonomy" id="418699"/>
    <lineage>
        <taxon>Bacteria</taxon>
        <taxon>Pseudomonadati</taxon>
        <taxon>Pseudomonadota</taxon>
        <taxon>Betaproteobacteria</taxon>
        <taxon>Rhodocyclales</taxon>
        <taxon>Zoogloeaceae</taxon>
        <taxon>Azoarcus</taxon>
    </lineage>
</organism>
<accession>A1K9I4</accession>
<feature type="chain" id="PRO_1000018663" description="Phosphoribosylaminoimidazole-succinocarboxamide synthase">
    <location>
        <begin position="1"/>
        <end position="311"/>
    </location>
</feature>
<evidence type="ECO:0000255" key="1">
    <source>
        <dbReference type="HAMAP-Rule" id="MF_00137"/>
    </source>
</evidence>
<proteinExistence type="inferred from homology"/>
<gene>
    <name evidence="1" type="primary">purC</name>
    <name type="ordered locus">azo2873</name>
</gene>